<sequence length="288" mass="32398">MNEQKMNEQMKKTAKTSGQKGPGGRALDRLTLKQDEARPVQNTRVEAPRVTYTIRDESEISPETEEDGFPDGYLECIIRGEFSEPILEEDFLFKSFESLEEVEQNLSRQVLEASSLLESSLEYMTKGTKQEKTEVTQETPPLRVGASSLLAGGPAEKPEGGVYCGVLSMLECPQAGCKKKLRGKTALRKHMLVHGPRRHVCAECGKAFTESSKLKRHFLVHTGEKPYQCTFEGCGKRFSLDFNLRTHIRIHTGERRFVCPFDGCEKSFIQSNNQKIHILTHAKAGKKC</sequence>
<name>ZFP42_MOUSE</name>
<feature type="chain" id="PRO_0000047300" description="Zinc finger protein 42">
    <location>
        <begin position="1"/>
        <end position="288"/>
    </location>
</feature>
<feature type="zinc finger region" description="C2H2-type 1" evidence="1">
    <location>
        <begin position="170"/>
        <end position="194"/>
    </location>
</feature>
<feature type="zinc finger region" description="C2H2-type 2" evidence="1">
    <location>
        <begin position="199"/>
        <end position="221"/>
    </location>
</feature>
<feature type="zinc finger region" description="C2H2-type 3" evidence="1">
    <location>
        <begin position="227"/>
        <end position="251"/>
    </location>
</feature>
<feature type="zinc finger region" description="C2H2-type 4" evidence="1">
    <location>
        <begin position="258"/>
        <end position="281"/>
    </location>
</feature>
<feature type="region of interest" description="Disordered" evidence="2">
    <location>
        <begin position="1"/>
        <end position="48"/>
    </location>
</feature>
<feature type="compositionally biased region" description="Basic and acidic residues" evidence="2">
    <location>
        <begin position="1"/>
        <end position="11"/>
    </location>
</feature>
<feature type="compositionally biased region" description="Basic and acidic residues" evidence="2">
    <location>
        <begin position="26"/>
        <end position="38"/>
    </location>
</feature>
<feature type="cross-link" description="Glycyl lysine isopeptide (Lys-Gly) (interchain with G-Cter in ubiquitin)" evidence="9">
    <location>
        <position position="213"/>
    </location>
</feature>
<feature type="cross-link" description="Glycyl lysine isopeptide (Lys-Gly) (interchain with G-Cter in ubiquitin)" evidence="9">
    <location>
        <position position="215"/>
    </location>
</feature>
<feature type="sequence conflict" description="In Ref. 3; AAH53399." evidence="11" ref="3">
    <original>T</original>
    <variation>A</variation>
    <location>
        <position position="13"/>
    </location>
</feature>
<feature type="sequence conflict" description="In Ref. 3; AAH53399." evidence="11" ref="3">
    <original>T</original>
    <variation>R</variation>
    <location>
        <position position="133"/>
    </location>
</feature>
<feature type="sequence conflict" description="In Ref. 3; AAH53399." evidence="11" ref="3">
    <original>A</original>
    <variation>T</variation>
    <location>
        <position position="155"/>
    </location>
</feature>
<feature type="sequence conflict" description="In Ref. 3; AAH53399." evidence="11" ref="3">
    <original>G</original>
    <variation>D</variation>
    <location>
        <position position="183"/>
    </location>
</feature>
<dbReference type="EMBL" id="M28382">
    <property type="protein sequence ID" value="AAA40053.1"/>
    <property type="molecule type" value="mRNA"/>
</dbReference>
<dbReference type="EMBL" id="M97812">
    <property type="protein sequence ID" value="AAA19700.1"/>
    <property type="molecule type" value="Genomic_DNA"/>
</dbReference>
<dbReference type="EMBL" id="BC053399">
    <property type="protein sequence ID" value="AAH53399.1"/>
    <property type="molecule type" value="mRNA"/>
</dbReference>
<dbReference type="EMBL" id="BC098467">
    <property type="protein sequence ID" value="AAH98467.1"/>
    <property type="molecule type" value="mRNA"/>
</dbReference>
<dbReference type="CCDS" id="CCDS22267.1"/>
<dbReference type="PIR" id="A33828">
    <property type="entry name" value="A33828"/>
</dbReference>
<dbReference type="RefSeq" id="NP_033582.2">
    <property type="nucleotide sequence ID" value="NM_009556.3"/>
</dbReference>
<dbReference type="SMR" id="P22227"/>
<dbReference type="BioGRID" id="204664">
    <property type="interactions" value="17"/>
</dbReference>
<dbReference type="DIP" id="DIP-54911N"/>
<dbReference type="FunCoup" id="P22227">
    <property type="interactions" value="38"/>
</dbReference>
<dbReference type="IntAct" id="P22227">
    <property type="interactions" value="4"/>
</dbReference>
<dbReference type="MINT" id="P22227"/>
<dbReference type="STRING" id="10090.ENSMUSP00000147606"/>
<dbReference type="iPTMnet" id="P22227"/>
<dbReference type="PhosphoSitePlus" id="P22227"/>
<dbReference type="jPOST" id="P22227"/>
<dbReference type="PaxDb" id="10090-ENSMUSP00000080765"/>
<dbReference type="PeptideAtlas" id="P22227"/>
<dbReference type="ProteomicsDB" id="275357"/>
<dbReference type="DNASU" id="22702"/>
<dbReference type="GeneID" id="22702"/>
<dbReference type="KEGG" id="mmu:22702"/>
<dbReference type="AGR" id="MGI:99187"/>
<dbReference type="CTD" id="132625"/>
<dbReference type="MGI" id="MGI:99187">
    <property type="gene designation" value="Zfp42"/>
</dbReference>
<dbReference type="eggNOG" id="KOG1721">
    <property type="taxonomic scope" value="Eukaryota"/>
</dbReference>
<dbReference type="InParanoid" id="P22227"/>
<dbReference type="OrthoDB" id="10264072at2759"/>
<dbReference type="PhylomeDB" id="P22227"/>
<dbReference type="BioGRID-ORCS" id="22702">
    <property type="hits" value="3 hits in 76 CRISPR screens"/>
</dbReference>
<dbReference type="PRO" id="PR:P22227"/>
<dbReference type="Proteomes" id="UP000000589">
    <property type="component" value="Unplaced"/>
</dbReference>
<dbReference type="RNAct" id="P22227">
    <property type="molecule type" value="protein"/>
</dbReference>
<dbReference type="GO" id="GO:0005737">
    <property type="term" value="C:cytoplasm"/>
    <property type="evidence" value="ECO:0000314"/>
    <property type="project" value="MGI"/>
</dbReference>
<dbReference type="GO" id="GO:0005634">
    <property type="term" value="C:nucleus"/>
    <property type="evidence" value="ECO:0000314"/>
    <property type="project" value="MGI"/>
</dbReference>
<dbReference type="GO" id="GO:0032991">
    <property type="term" value="C:protein-containing complex"/>
    <property type="evidence" value="ECO:0000314"/>
    <property type="project" value="MGI"/>
</dbReference>
<dbReference type="GO" id="GO:0001228">
    <property type="term" value="F:DNA-binding transcription activator activity, RNA polymerase II-specific"/>
    <property type="evidence" value="ECO:0000315"/>
    <property type="project" value="NTNU_SB"/>
</dbReference>
<dbReference type="GO" id="GO:0000978">
    <property type="term" value="F:RNA polymerase II cis-regulatory region sequence-specific DNA binding"/>
    <property type="evidence" value="ECO:0000315"/>
    <property type="project" value="NTNU_SB"/>
</dbReference>
<dbReference type="GO" id="GO:0043565">
    <property type="term" value="F:sequence-specific DNA binding"/>
    <property type="evidence" value="ECO:0000314"/>
    <property type="project" value="MGI"/>
</dbReference>
<dbReference type="GO" id="GO:0008270">
    <property type="term" value="F:zinc ion binding"/>
    <property type="evidence" value="ECO:0007669"/>
    <property type="project" value="UniProtKB-KW"/>
</dbReference>
<dbReference type="GO" id="GO:1990830">
    <property type="term" value="P:cellular response to leukemia inhibitory factor"/>
    <property type="evidence" value="ECO:0000270"/>
    <property type="project" value="MGI"/>
</dbReference>
<dbReference type="GO" id="GO:0071514">
    <property type="term" value="P:genomic imprinting"/>
    <property type="evidence" value="ECO:0000315"/>
    <property type="project" value="MGI"/>
</dbReference>
<dbReference type="GO" id="GO:0001701">
    <property type="term" value="P:in utero embryonic development"/>
    <property type="evidence" value="ECO:0000315"/>
    <property type="project" value="MGI"/>
</dbReference>
<dbReference type="GO" id="GO:0045944">
    <property type="term" value="P:positive regulation of transcription by RNA polymerase II"/>
    <property type="evidence" value="ECO:0000315"/>
    <property type="project" value="NTNU_SB"/>
</dbReference>
<dbReference type="GO" id="GO:0007286">
    <property type="term" value="P:spermatid development"/>
    <property type="evidence" value="ECO:0000315"/>
    <property type="project" value="MGI"/>
</dbReference>
<dbReference type="FunFam" id="3.30.160.60:FF:000104">
    <property type="entry name" value="Transcriptional repressor protein YY1"/>
    <property type="match status" value="1"/>
</dbReference>
<dbReference type="FunFam" id="3.30.160.60:FF:000109">
    <property type="entry name" value="Transcriptional repressor protein YY1"/>
    <property type="match status" value="1"/>
</dbReference>
<dbReference type="FunFam" id="3.30.160.60:FF:000163">
    <property type="entry name" value="transcriptional repressor protein YY1"/>
    <property type="match status" value="1"/>
</dbReference>
<dbReference type="Gene3D" id="3.30.160.60">
    <property type="entry name" value="Classic Zinc Finger"/>
    <property type="match status" value="4"/>
</dbReference>
<dbReference type="InterPro" id="IPR036236">
    <property type="entry name" value="Znf_C2H2_sf"/>
</dbReference>
<dbReference type="InterPro" id="IPR013087">
    <property type="entry name" value="Znf_C2H2_type"/>
</dbReference>
<dbReference type="PANTHER" id="PTHR14003">
    <property type="entry name" value="TRANSCRIPTIONAL REPRESSOR PROTEIN YY"/>
    <property type="match status" value="1"/>
</dbReference>
<dbReference type="PANTHER" id="PTHR14003:SF8">
    <property type="entry name" value="ZINC FINGER PROTEIN 42 HOMOLOG"/>
    <property type="match status" value="1"/>
</dbReference>
<dbReference type="Pfam" id="PF00096">
    <property type="entry name" value="zf-C2H2"/>
    <property type="match status" value="3"/>
</dbReference>
<dbReference type="SMART" id="SM00355">
    <property type="entry name" value="ZnF_C2H2"/>
    <property type="match status" value="4"/>
</dbReference>
<dbReference type="SUPFAM" id="SSF57667">
    <property type="entry name" value="beta-beta-alpha zinc fingers"/>
    <property type="match status" value="3"/>
</dbReference>
<dbReference type="PROSITE" id="PS00028">
    <property type="entry name" value="ZINC_FINGER_C2H2_1"/>
    <property type="match status" value="4"/>
</dbReference>
<dbReference type="PROSITE" id="PS50157">
    <property type="entry name" value="ZINC_FINGER_C2H2_2"/>
    <property type="match status" value="4"/>
</dbReference>
<organism>
    <name type="scientific">Mus musculus</name>
    <name type="common">Mouse</name>
    <dbReference type="NCBI Taxonomy" id="10090"/>
    <lineage>
        <taxon>Eukaryota</taxon>
        <taxon>Metazoa</taxon>
        <taxon>Chordata</taxon>
        <taxon>Craniata</taxon>
        <taxon>Vertebrata</taxon>
        <taxon>Euteleostomi</taxon>
        <taxon>Mammalia</taxon>
        <taxon>Eutheria</taxon>
        <taxon>Euarchontoglires</taxon>
        <taxon>Glires</taxon>
        <taxon>Rodentia</taxon>
        <taxon>Myomorpha</taxon>
        <taxon>Muroidea</taxon>
        <taxon>Muridae</taxon>
        <taxon>Murinae</taxon>
        <taxon>Mus</taxon>
        <taxon>Mus</taxon>
    </lineage>
</organism>
<reference key="1">
    <citation type="journal article" date="1989" name="Mol. Cell. Biol.">
        <title>Expression of REX-1, a gene containing zinc finger motifs, is rapidly reduced by retinoic acid in F9 teratocarcinoma cells.</title>
        <authorList>
            <person name="Hosler B.A."/>
            <person name="Larosa G.J."/>
            <person name="Grippo J.F."/>
            <person name="Gudas L.J."/>
        </authorList>
    </citation>
    <scope>NUCLEOTIDE SEQUENCE [MRNA]</scope>
    <scope>INDUCTION</scope>
    <source>
        <tissue>Embryonic stem cell</tissue>
    </source>
</reference>
<reference key="2">
    <citation type="journal article" date="1993" name="Mol. Cell. Biol.">
        <title>An octamer motif contributes to the expression of the retinoic acid-regulated zinc finger gene Rex-1 (Zfp-42) in F9 teratocarcinoma cells.</title>
        <authorList>
            <person name="Hosler B.A."/>
            <person name="Rogers M.B."/>
            <person name="Kozak C.A."/>
            <person name="Gudas L.J."/>
        </authorList>
    </citation>
    <scope>NUCLEOTIDE SEQUENCE [GENOMIC DNA]</scope>
</reference>
<reference key="3">
    <citation type="journal article" date="2004" name="Genome Res.">
        <title>The status, quality, and expansion of the NIH full-length cDNA project: the Mammalian Gene Collection (MGC).</title>
        <authorList>
            <consortium name="The MGC Project Team"/>
        </authorList>
    </citation>
    <scope>NUCLEOTIDE SEQUENCE [LARGE SCALE MRNA]</scope>
    <source>
        <strain>129/Sv X 129SvCp</strain>
        <strain>C57BL/6J</strain>
        <tissue>Blastocyst</tissue>
        <tissue>Embryonic stem cell</tissue>
    </source>
</reference>
<reference key="4">
    <citation type="journal article" date="1991" name="Development">
        <title>Specific expression of a retinoic acid-regulated, zinc-finger gene, Rex-1, in preimplantation embryos, trophoblast and spermatocytes.</title>
        <authorList>
            <person name="Rogers M.B."/>
            <person name="Hosler B.A."/>
            <person name="Gudas L.J."/>
        </authorList>
    </citation>
    <scope>INDUCTION</scope>
    <scope>TISSUE SPECIFICITY</scope>
    <scope>DEVELOPMENTAL STAGE</scope>
</reference>
<reference key="5">
    <citation type="journal article" date="2005" name="Reprod. Toxicol.">
        <title>Effect of nicotine on Oct-4 and Rex-1 expression of mouse embryonic stem cells.</title>
        <authorList>
            <person name="Zhang H."/>
            <person name="Guo D."/>
            <person name="Wang L."/>
            <person name="Zhao Y."/>
            <person name="Cheng Y."/>
            <person name="Qiao Z."/>
        </authorList>
    </citation>
    <scope>INDUCTION</scope>
    <scope>TISSUE SPECIFICITY</scope>
</reference>
<reference key="6">
    <citation type="journal article" date="2006" name="J. Biol. Chem.">
        <title>Regulation of the pluripotency marker Rex-1 by Nanog and Sox2.</title>
        <authorList>
            <person name="Shi W."/>
            <person name="Wang H."/>
            <person name="Pan G."/>
            <person name="Geng Y."/>
            <person name="Guo Y."/>
            <person name="Pei D."/>
        </authorList>
    </citation>
    <scope>INDUCTION</scope>
</reference>
<reference key="7">
    <citation type="journal article" date="2006" name="Mol. Cell. Biol.">
        <title>The Grb2/Mek pathway represses Nanog in murine embryonic stem cells.</title>
        <authorList>
            <person name="Hamazaki T."/>
            <person name="Kehoe S.M."/>
            <person name="Nakano T."/>
            <person name="Terada N."/>
        </authorList>
    </citation>
    <scope>INDUCTION</scope>
    <scope>TISSUE SPECIFICITY</scope>
</reference>
<reference key="8">
    <citation type="journal article" date="2006" name="Stem Cells">
        <title>Screening for genes essential for mouse embryonic stem cell self-renewal using a subtractive RNA interference library.</title>
        <authorList>
            <person name="Zhang J.-Z."/>
            <person name="Gao W."/>
            <person name="Yang H.-B."/>
            <person name="Zhang B."/>
            <person name="Zhu Z.-Y."/>
            <person name="Xue Y.-F."/>
        </authorList>
    </citation>
    <scope>FUNCTION</scope>
    <scope>SUBCELLULAR LOCATION</scope>
    <scope>TISSUE SPECIFICITY</scope>
</reference>
<reference key="9">
    <citation type="journal article" date="2010" name="Nature">
        <title>Molecular coupling of Tsix regulation and pluripotency.</title>
        <authorList>
            <person name="Navarro P."/>
            <person name="Oldfield A."/>
            <person name="Legoupi J."/>
            <person name="Festuccia N."/>
            <person name="Dubois A."/>
            <person name="Attia M."/>
            <person name="Schoorlemmer J."/>
            <person name="Rougeulle C."/>
            <person name="Chambers I."/>
            <person name="Avner P."/>
        </authorList>
    </citation>
    <scope>FUNCTION</scope>
</reference>
<reference key="10">
    <citation type="journal article" date="2012" name="Nature">
        <title>RNF12 initiates X-chromosome inactivation by targeting REX1 for degradation.</title>
        <authorList>
            <person name="Gontan C."/>
            <person name="Achame E.M."/>
            <person name="Demmers J."/>
            <person name="Barakat T.S."/>
            <person name="Rentmeester E."/>
            <person name="van Ijcken W."/>
            <person name="Grootegoed J.A."/>
            <person name="Gribnau J."/>
        </authorList>
    </citation>
    <scope>UBIQUITINATION AT LYS-213 AND LYS-215 BY RNF12</scope>
</reference>
<accession>P22227</accession>
<accession>Q4KMN3</accession>
<accession>Q7TPU3</accession>
<proteinExistence type="evidence at protein level"/>
<comment type="function">
    <text evidence="6 8">Involved in the reprogramming of X-chromosome inactivation during the acquisition of pluripotency. Required for efficient elongation of TSIX, a non-coding RNA antisense to XIST. Binds DXPas34 enhancer within the TSIX promoter. Involved in ES cell self-renewal.</text>
</comment>
<comment type="interaction">
    <interactant intactId="EBI-2313372">
        <id>P22227</id>
    </interactant>
    <interactant intactId="EBI-15657872">
        <id>Q9WTV7</id>
        <label>Rlim</label>
    </interactant>
    <organismsDiffer>false</organismsDiffer>
    <experiments>8</experiments>
</comment>
<comment type="subcellular location">
    <subcellularLocation>
        <location evidence="6">Nucleus</location>
    </subcellularLocation>
</comment>
<comment type="tissue specificity">
    <text evidence="3 5 6 7">Restricted to testis, to germ cells in the early stages of spermatogenesis. Not expressed in spermatids, nor spermatozoa. Expressed in embryonic stem (ES) cells.</text>
</comment>
<comment type="developmental stage">
    <text evidence="7">Expressed in the inner cell mass of 4.5 dpc blastocysts, as well as in the polar trophoblast. At 6 dpc, abundant in the extraembryonic ectoderm and the ectoplacental cone. At this stage, not detected in the embryonic ectoderm. At 7 dpc, restricted to the extraembryonic ectoderm and the ectoplacental cone. Also expressed in the placenta. Expressed in male germ cells undergoing meiosis.</text>
</comment>
<comment type="induction">
    <text evidence="3 4 5 7 10">Up-regulated by NANOG, up-regulation which is increased by SOX2 and POU5F1. Up-regulated by nicotine; up-regulation which is prevented with tubocurarine, a nicotinic acetylcholine receptor antagonist. Down-regulated by sodium vanadate and retinoic acid (RA). In ES cells, down-regulation correlates with differentiation.</text>
</comment>
<comment type="PTM">
    <text evidence="9">Polyubiquitinated by RNF12, leading to proteasomal degradation.</text>
</comment>
<comment type="similarity">
    <text evidence="11">Belongs to the krueppel C2H2-type zinc-finger protein family.</text>
</comment>
<keyword id="KW-0010">Activator</keyword>
<keyword id="KW-0238">DNA-binding</keyword>
<keyword id="KW-1017">Isopeptide bond</keyword>
<keyword id="KW-0479">Metal-binding</keyword>
<keyword id="KW-0539">Nucleus</keyword>
<keyword id="KW-1185">Reference proteome</keyword>
<keyword id="KW-0677">Repeat</keyword>
<keyword id="KW-0804">Transcription</keyword>
<keyword id="KW-0805">Transcription regulation</keyword>
<keyword id="KW-0832">Ubl conjugation</keyword>
<keyword id="KW-0862">Zinc</keyword>
<keyword id="KW-0863">Zinc-finger</keyword>
<gene>
    <name type="primary">Zfp42</name>
    <name type="synonym">Rex-1</name>
    <name type="synonym">Rex1</name>
</gene>
<evidence type="ECO:0000255" key="1">
    <source>
        <dbReference type="PROSITE-ProRule" id="PRU00042"/>
    </source>
</evidence>
<evidence type="ECO:0000256" key="2">
    <source>
        <dbReference type="SAM" id="MobiDB-lite"/>
    </source>
</evidence>
<evidence type="ECO:0000269" key="3">
    <source>
    </source>
</evidence>
<evidence type="ECO:0000269" key="4">
    <source>
    </source>
</evidence>
<evidence type="ECO:0000269" key="5">
    <source>
    </source>
</evidence>
<evidence type="ECO:0000269" key="6">
    <source>
    </source>
</evidence>
<evidence type="ECO:0000269" key="7">
    <source>
    </source>
</evidence>
<evidence type="ECO:0000269" key="8">
    <source>
    </source>
</evidence>
<evidence type="ECO:0000269" key="9">
    <source>
    </source>
</evidence>
<evidence type="ECO:0000269" key="10">
    <source>
    </source>
</evidence>
<evidence type="ECO:0000305" key="11"/>
<protein>
    <recommendedName>
        <fullName>Zinc finger protein 42</fullName>
        <shortName>Zfp-42</shortName>
    </recommendedName>
    <alternativeName>
        <fullName>Reduced expression protein 1</fullName>
        <shortName>REX-1</shortName>
        <shortName>mREX-1</shortName>
    </alternativeName>
</protein>